<name>LT_SV40</name>
<comment type="function">
    <text evidence="10 13 16 24 25 32 34 36">Isoform large T antigen is a key early protein essential for both driving viral replication and inducing cellular transformation. Plays a role in viral genome replication by driving entry of quiescent cells into the cell cycle and by autoregulating the synthesis of viral early mRNA. Displays highly oncogenic activities by corrupting the host cellular checkpoint mechanisms that guard cell division and the transcription, replication, and repair of DNA. Participates in the modulation of cellular gene expression preceeding viral DNA replication. This step involves binding to host key cell cycle regulators retinoblastoma protein RB1/pRb and TP53. Induces the disassembly of host E2F1 transcription factors from RB1, thus promoting transcriptional activation of E2F1-regulated S-phase genes. Inhibits host TP53 binding to DNA, abrogating the ability of TP53 to stimulate gene expression. Plays the role of a TFIID-associated factor (TAF) in transcription initiation for all three RNA polymerases, by stabilizing the TBP-TFIIA complex on promoters. Initiates viral DNA replication and unwinding via interactions with the viral origin of replication. Binds two adjacent sites in the SV40 origin. The replication fork movement is facilitated by Large T antigen helicase activity. Has processive 3'-5' DNA helicase activity which requires a short 3' single-stranded region and ATP; other (d)NTPs can partially replace ATP (PubMed:2826443, PubMed:2826446). Activates the transcription of viral late mRNA, through host TBP and TFIIA stabilization. Interferes with histone deacetylation mediated by HDAC1, leading to activation of transcription. May inactivate the growth-suppressing properties of the E3 ubiquitin ligase CUL7.</text>
</comment>
<comment type="function">
    <text evidence="11">Isoform 17kT antigen targets host RBL2 for degradation and promotes cell proliferation. Transactivates host cyclin A promoter through its J domain.</text>
</comment>
<comment type="function">
    <text evidence="34">Unwinds G4 DNA (planar arrays of 4 guanine bases stabilized by hydrogen bonds, parallel and antiparallel arrays were tested); unwinding occurs in the 3'-5' direction, requires a 3' single-stranded end and hydrolyzable ATP (PubMed:9016557).</text>
</comment>
<comment type="catalytic activity">
    <reaction evidence="24 25 34">
        <text>Couples ATP hydrolysis with the unwinding of duplex DNA by translocating in the 3'-5' direction.</text>
        <dbReference type="EC" id="5.6.2.4"/>
    </reaction>
</comment>
<comment type="catalytic activity">
    <reaction evidence="39 40 41">
        <text>ATP + H2O = ADP + phosphate + H(+)</text>
        <dbReference type="Rhea" id="RHEA:13065"/>
        <dbReference type="ChEBI" id="CHEBI:15377"/>
        <dbReference type="ChEBI" id="CHEBI:15378"/>
        <dbReference type="ChEBI" id="CHEBI:30616"/>
        <dbReference type="ChEBI" id="CHEBI:43474"/>
        <dbReference type="ChEBI" id="CHEBI:456216"/>
        <dbReference type="EC" id="5.6.2.4"/>
    </reaction>
</comment>
<comment type="cofactor">
    <cofactor evidence="24 25">
        <name>Mg(2+)</name>
        <dbReference type="ChEBI" id="CHEBI:18420"/>
    </cofactor>
    <text evidence="24 25">DNA helicase activity requires Mg(2+) (PubMed:2826443, PubMed:2826446).</text>
</comment>
<comment type="activity regulation">
    <text evidence="24">DNA helicase activity is inhibited by ATP-gamma-S (PubMed:2826443).</text>
</comment>
<comment type="subunit">
    <text evidence="7 8 10 12 13 14 16 20 21 22 27 28 32 36 38">Isoform large T antigen forms homohexamers in the presence of ATP. Interacts with host HDAC1. Interacts (via LXCXE domain) with host RB1; the interaction induces the aberrant dissociation of RB1-E2F1 complex thereby disrupting RB1's activity. Interacts (via LXCXE domain) with host pRB-related proteins RBL1 and RBL2. Interacts (via C-terminus) with host TOP1 and POLA1 allowing DNA replication. Interacts with host TP53, inhibiting TP53 binding to DNA. Interacts with host preinitiation complex components TBP, TFIIA and TFIID to regulate transcription initiation. LT interacts (via CPD region) with host FBW7gamma isoform (via WD repeats); seems to function as a competitive inhibitor of FBW7gamma function for physiologic substrates. LT interacts with host E3 ubiquitin ligase CUL7; this interaction seems to inhibit CUL7. Component of a SCF(CUL7)-like complex composed of SV40 Lt and host proteins CUL7, SKP1, RBX1, and FBXW8. LT interacts with host BUB1; this interaction induces activation of a DNA damage response and promotes p53 stabilization and phosphorylation (Probable). Interacts with host FAM111A and this interaction is required for efficient viral replication and sustained viral gene expression in restrictive cell types.</text>
</comment>
<comment type="interaction">
    <interactant intactId="EBI-617698">
        <id>P03070</id>
    </interactant>
    <interactant intactId="EBI-617698">
        <id>P03070</id>
        <label>-</label>
    </interactant>
    <organismsDiffer>false</organismsDiffer>
    <experiments>2</experiments>
</comment>
<comment type="interaction">
    <interactant intactId="EBI-617698">
        <id>P03070</id>
    </interactant>
    <interactant intactId="EBI-748936">
        <id>O43683</id>
        <label>BUB1</label>
    </interactant>
    <organismsDiffer>true</organismsDiffer>
    <experiments>2</experiments>
</comment>
<comment type="interaction">
    <interactant intactId="EBI-617698">
        <id>P03070</id>
    </interactant>
    <interactant intactId="EBI-457097">
        <id>P20248</id>
        <label>CCNA2</label>
    </interactant>
    <organismsDiffer>true</organismsDiffer>
    <experiments>2</experiments>
</comment>
<comment type="interaction">
    <interactant intactId="EBI-617698">
        <id>P03070</id>
    </interactant>
    <interactant intactId="EBI-4253">
        <id>P00546</id>
        <label>CDC28</label>
    </interactant>
    <organismsDiffer>true</organismsDiffer>
    <experiments>3</experiments>
</comment>
<comment type="interaction">
    <interactant intactId="EBI-617698">
        <id>P03070</id>
    </interactant>
    <interactant intactId="EBI-444308">
        <id>P06493</id>
        <label>CDK1</label>
    </interactant>
    <organismsDiffer>true</organismsDiffer>
    <experiments>2</experiments>
</comment>
<comment type="interaction">
    <interactant intactId="EBI-617698">
        <id>P03070</id>
    </interactant>
    <interactant intactId="EBI-81215">
        <id>Q92793</id>
        <label>CREBBP</label>
    </interactant>
    <organismsDiffer>true</organismsDiffer>
    <experiments>3</experiments>
</comment>
<comment type="interaction">
    <interactant intactId="EBI-617698">
        <id>P03070</id>
    </interactant>
    <interactant intactId="EBI-447295">
        <id>Q09472</id>
        <label>EP300</label>
    </interactant>
    <organismsDiffer>true</organismsDiffer>
    <experiments>2</experiments>
</comment>
<comment type="interaction">
    <interactant intactId="EBI-617698">
        <id>P03070</id>
    </interactant>
    <interactant intactId="EBI-517592">
        <id>P35568</id>
        <label>IRS1</label>
    </interactant>
    <organismsDiffer>true</organismsDiffer>
    <experiments>2</experiments>
</comment>
<comment type="interaction">
    <interactant intactId="EBI-617698">
        <id>P03070</id>
    </interactant>
    <interactant intactId="EBI-349938">
        <id>P52292</id>
        <label>KPNA2</label>
    </interactant>
    <organismsDiffer>true</organismsDiffer>
    <experiments>2</experiments>
</comment>
<comment type="interaction">
    <interactant intactId="EBI-617698">
        <id>P03070</id>
    </interactant>
    <interactant intactId="EBI-3043908">
        <id>P52293</id>
        <label>Kpna2</label>
    </interactant>
    <organismsDiffer>true</organismsDiffer>
    <experiments>3</experiments>
</comment>
<comment type="interaction">
    <interactant intactId="EBI-617698">
        <id>P03070</id>
    </interactant>
    <interactant intactId="EBI-396343">
        <id>O00629</id>
        <label>KPNA4</label>
    </interactant>
    <organismsDiffer>true</organismsDiffer>
    <experiments>2</experiments>
</comment>
<comment type="interaction">
    <interactant intactId="EBI-617698">
        <id>P03070</id>
    </interactant>
    <interactant intactId="EBI-447544">
        <id>P01106</id>
        <label>MYC</label>
    </interactant>
    <organismsDiffer>true</organismsDiffer>
    <experiments>2</experiments>
</comment>
<comment type="interaction">
    <interactant intactId="EBI-617698">
        <id>P03070</id>
    </interactant>
    <interactant intactId="EBI-850026">
        <id>P09884</id>
        <label>POLA1</label>
    </interactant>
    <organismsDiffer>true</organismsDiffer>
    <experiments>6</experiments>
</comment>
<comment type="interaction">
    <interactant intactId="EBI-617698">
        <id>P03070</id>
    </interactant>
    <interactant intactId="EBI-1045860">
        <id>Q00577</id>
        <label>PURA</label>
    </interactant>
    <organismsDiffer>true</organismsDiffer>
    <experiments>2</experiments>
</comment>
<comment type="interaction">
    <interactant intactId="EBI-617698">
        <id>P03070</id>
    </interactant>
    <interactant intactId="EBI-491274">
        <id>P06400</id>
        <label>RB1</label>
    </interactant>
    <organismsDiffer>true</organismsDiffer>
    <experiments>6</experiments>
</comment>
<comment type="interaction">
    <interactant intactId="EBI-617698">
        <id>P03070</id>
    </interactant>
    <interactant intactId="EBI-621389">
        <id>P27694</id>
        <label>RPA1</label>
    </interactant>
    <organismsDiffer>true</organismsDiffer>
    <experiments>3</experiments>
</comment>
<comment type="interaction">
    <interactant intactId="EBI-617698">
        <id>P03070</id>
    </interactant>
    <interactant intactId="EBI-474016">
        <id>P02340</id>
        <label>Tp53</label>
    </interactant>
    <organismsDiffer>true</organismsDiffer>
    <experiments>20</experiments>
</comment>
<comment type="interaction">
    <interactant intactId="EBI-617698">
        <id>P03070</id>
    </interactant>
    <interactant intactId="EBI-366083">
        <id>P04637</id>
        <label>TP53</label>
    </interactant>
    <organismsDiffer>true</organismsDiffer>
    <experiments>22</experiments>
</comment>
<comment type="subcellular location">
    <subcellularLocation>
        <location evidence="29 30">Host nucleus</location>
    </subcellularLocation>
</comment>
<comment type="alternative products">
    <event type="alternative splicing"/>
    <event type="alternative initiation"/>
    <isoform>
        <id>P03070-1</id>
        <name>Large T antigen</name>
        <sequence type="displayed"/>
    </isoform>
    <isoform>
        <id>P03081-1</id>
        <name>Small t antigen</name>
        <sequence type="external"/>
    </isoform>
    <isoform>
        <id>P03070-2</id>
        <name>17kT antigen</name>
        <sequence type="described" ref="VSP_035893 VSP_035894"/>
    </isoform>
    <isoform>
        <id>P0C6L2-1</id>
        <name>SELP</name>
        <sequence type="external"/>
    </isoform>
</comment>
<comment type="domain">
    <text evidence="35">The J domain is essential for multiple viral activities, including virion assembly, viral DNA replication, transformation and transcriptional activation.</text>
</comment>
<comment type="domain">
    <text evidence="6">The LXCXE motif specifically binds to host pRB, RBL1, and RBL2.</text>
</comment>
<comment type="domain">
    <text evidence="31">The origin-binding domain (T-ag OBD) interacts specifically with several pentameric sequences 5'-GAGGC-3' in the SV40 origin of DNA replication.</text>
</comment>
<comment type="domain">
    <text evidence="15 19">The zinc finger region contributes to protein-protein interactions essential for the assembly of stable T-antigen hexamers at the origin of replication. The hexamers are required for subsequent alterations in the structure of origin DNA (PubMed:1851875, PubMed:2173794).</text>
</comment>
<comment type="domain">
    <text evidence="21">The C-terminal region is involved in interaction with host FAM111A. It is also required for the host range and adenovirus helper functions of the virus (PubMed:23093934).</text>
</comment>
<comment type="domain">
    <text evidence="7">The ATP binding/ATPase domain is required for proper hexamer assembly and helicase activity.</text>
</comment>
<comment type="domain">
    <text>Cdc4 phospho-degron (CPD) region is involved in interaction with host FBW7gamma isoform.</text>
</comment>
<comment type="PTM">
    <text evidence="18 23 26 33">Phosphorylated on both serine and threonine residues. Phosphorylation on Ser-120 and Ser-123 inhibits viral replication, while phosphorylation on Thr-124 enhances replication by activating the DNA-binding domain. Phosphorylation on Thr-701 is required for binding to host FBW7gamma isoform. Dephosphorylated preferentially by PP2A on Ser-120, Ser-123, Ser-677 and perhaps Ser-679. Small t antigen inhibits the dephosphorylation by the AC form of PP2A.</text>
</comment>
<comment type="PTM">
    <text evidence="29">O-Glycosylated near the C-terminal region.</text>
</comment>
<comment type="PTM">
    <text evidence="9 17">Acetylated by CBP in a TP53-dependent manner.</text>
</comment>
<comment type="miscellaneous">
    <text evidence="38">The sequence shown is that of strain 776.</text>
</comment>
<comment type="miscellaneous">
    <molecule>Isoform 17kT antigen</molecule>
    <text evidence="38">Produced by alternative splicing.</text>
</comment>
<protein>
    <recommendedName>
        <fullName>Large T antigen</fullName>
        <shortName>LT</shortName>
        <shortName>LT-AG</shortName>
        <ecNumber evidence="24 25 34">5.6.2.4</ecNumber>
    </recommendedName>
    <alternativeName>
        <fullName evidence="38">DNA 3'-5' helicase large T antigen</fullName>
    </alternativeName>
</protein>
<accession>P03070</accession>
<organismHost>
    <name type="scientific">Macaca</name>
    <name type="common">macaques</name>
    <dbReference type="NCBI Taxonomy" id="9539"/>
</organismHost>
<reference key="1">
    <citation type="journal article" date="1978" name="Science">
        <title>The genome of simian virus 40.</title>
        <authorList>
            <person name="Reddy V.B."/>
            <person name="Thimmappaya B."/>
            <person name="Dhar R."/>
            <person name="Subramanian K.N."/>
            <person name="Zain B.S."/>
            <person name="Pan J."/>
            <person name="Ghosh P.K."/>
            <person name="Celma M.L."/>
            <person name="Weissman S.M."/>
        </authorList>
    </citation>
    <scope>NUCLEOTIDE SEQUENCE [GENOMIC DNA]</scope>
</reference>
<reference key="2">
    <citation type="journal article" date="1978" name="Nature">
        <title>Complete nucleotide sequence of SV40 DNA.</title>
        <authorList>
            <person name="Fiers W."/>
            <person name="Contreras R."/>
            <person name="Haegeman G."/>
            <person name="Rogiers R."/>
            <person name="van de Voorde A."/>
            <person name="van Heuverswyn H."/>
            <person name="van Herreweghe J."/>
            <person name="Volckaert G."/>
            <person name="Ysebaert M."/>
        </authorList>
    </citation>
    <scope>NUCLEOTIDE SEQUENCE [GENOMIC DNA]</scope>
    <scope>ACETYLATION AT MET-1</scope>
    <source>
        <strain>776</strain>
    </source>
</reference>
<reference key="3">
    <citation type="journal article" date="1993" name="EMBO J.">
        <title>Independent expression of the transforming amino-terminal domain of SV40 large I antigen from an alternatively spliced third SV40 early mRNA.</title>
        <authorList>
            <person name="Zerrahn J."/>
            <person name="Knippschild U."/>
            <person name="Winkler T."/>
            <person name="Deppert W."/>
        </authorList>
    </citation>
    <scope>PROTEIN SEQUENCE (ISOFORM 17KT ANTIGEN)</scope>
    <scope>ALTERNATIVE SPLICING</scope>
</reference>
<reference key="4">
    <citation type="journal article" date="1989" name="Nature">
        <title>Phosphorylation of large tumour antigen by cdc2 stimulates SV40 DNA replication.</title>
        <authorList>
            <person name="McVey D."/>
            <person name="Brizuela L."/>
            <person name="Mohr I."/>
            <person name="Marshak D.R."/>
            <person name="Gluzman Y."/>
            <person name="Beach D."/>
        </authorList>
    </citation>
    <scope>PROTEIN SEQUENCE OF 102-118</scope>
    <scope>PHOSPHORYLATION AT THR-124 BY CDC2</scope>
</reference>
<reference key="5">
    <citation type="journal article" date="1979" name="Nature">
        <title>T antigen is bound to a host protein in SV40-transformed cells.</title>
        <authorList>
            <person name="Lane D.P."/>
            <person name="Crawford L.V."/>
        </authorList>
    </citation>
    <scope>INTERACTION WITH HOST TP53</scope>
</reference>
<reference key="6">
    <citation type="journal article" date="1983" name="J. Virol.">
        <title>Topography of simian virus 40 A protein-DNA complexes: arrangement of pentanucleotide interaction sites at the origin of replication.</title>
        <authorList>
            <person name="DeLucia A.L."/>
            <person name="Lewton B.A."/>
            <person name="Tjian R."/>
            <person name="Tegtmeyer P."/>
        </authorList>
    </citation>
    <scope>DNA-BINDING</scope>
    <scope>DOMAIN</scope>
</reference>
<reference key="7">
    <citation type="journal article" date="1984" name="Cell">
        <title>A short amino acid sequence able to specify nuclear location.</title>
        <authorList>
            <person name="Kalderon D."/>
            <person name="Roberts B.L."/>
            <person name="Richardson W.D."/>
            <person name="Smith A.E."/>
        </authorList>
    </citation>
    <scope>NUCLEAR LOCALIZATION SIGNAL</scope>
    <scope>SUBCELLULAR LOCATION</scope>
</reference>
<reference key="8">
    <citation type="journal article" date="1986" name="Mol. Cell. Biol.">
        <title>T-antigen-DNA polymerase alpha complex implicated in simian virus 40 DNA replication.</title>
        <authorList>
            <person name="Smale S.T."/>
            <person name="Tjian R."/>
        </authorList>
    </citation>
    <scope>INTERACTION WITH HOST POLA1</scope>
</reference>
<reference key="9">
    <citation type="journal article" date="1987" name="Virology">
        <title>Glycosylation of simian virus 40 T antigen and localization of glycosylated T antigen in the nuclear matrix.</title>
        <authorList>
            <person name="Schmitt M.K."/>
            <person name="Mann K."/>
        </authorList>
    </citation>
    <scope>GLYCOSYLATION</scope>
    <scope>SUBCELLULAR LOCATION</scope>
</reference>
<reference key="10">
    <citation type="journal article" date="1988" name="Cell">
        <title>SV40 large tumor antigen forms a specific complex with the product of the retinoblastoma susceptibility gene.</title>
        <authorList>
            <person name="Decaprio J.A."/>
            <person name="Ludlow J.W."/>
            <person name="Figge J."/>
            <person name="Shew J.-Y."/>
            <person name="Huang C.-M."/>
            <person name="Lee W.-H."/>
            <person name="Marsilio E."/>
            <person name="Paucha E."/>
            <person name="Livingston D.M."/>
        </authorList>
    </citation>
    <scope>INTERACTION WITH HOST RB PROTEIN</scope>
</reference>
<reference key="11">
    <citation type="journal article" date="1988" name="J. Biol. Chem.">
        <title>The unwinding of duplex regions in DNA by the simian virus 40 large tumor antigen-associated DNA helicase activity.</title>
        <authorList>
            <person name="Goetz G.S."/>
            <person name="Dean F.B."/>
            <person name="Hurwitz J."/>
            <person name="Matson S.W."/>
        </authorList>
    </citation>
    <scope>FUNCTION AS A 3'-5' DNA HELICASE</scope>
    <scope>CATALYTIC ACTIVITY</scope>
    <scope>COFACTOR</scope>
    <scope>ACTIVITY REGULATION</scope>
</reference>
<reference key="12">
    <citation type="journal article" date="1988" name="J. Biol. Chem.">
        <title>Simian virus 40 large T antigen DNA helicase. Characterization of the ATPase-dependent DNA unwinding activity and its substrate requirements.</title>
        <authorList>
            <person name="Wiekowski M."/>
            <person name="Schwarz M.W."/>
            <person name="Stahl H."/>
        </authorList>
    </citation>
    <scope>FUNCTION AS A 3'-5' DNA HELICASE</scope>
    <scope>CATALYTIC ACTIVITY</scope>
    <scope>COFACTOR</scope>
</reference>
<reference key="13">
    <citation type="journal article" date="1988" name="Virology">
        <title>In vitro phosphorylation of SV40 large T antigen.</title>
        <authorList>
            <person name="Graesser F.A."/>
            <person name="Scheidmann K.H."/>
            <person name="Tuazon P.T."/>
            <person name="Traugh J.A."/>
            <person name="Walter G."/>
        </authorList>
    </citation>
    <scope>PHOSPHORYLATION AT SER-106; SER-112; SER-123; THR-124; SER-676; SER-677; SER-679 AND THR-701</scope>
</reference>
<reference key="14">
    <citation type="journal article" date="1989" name="EMBO J.">
        <title>Activation of SV40 DNA replication in vitro by cellular protein phosphatase 2A.</title>
        <authorList>
            <person name="Virshup D.M."/>
            <person name="Kauffman M.G."/>
            <person name="Kelly T.J."/>
        </authorList>
    </citation>
    <scope>ACTIVATION OF DNA REPLICATION BY HOST PP2A</scope>
</reference>
<reference key="15">
    <citation type="journal article" date="1989" name="Cell">
        <title>The cellular 107K protein that binds to adenovirus E1A also associates with the large T antigens of SV40 and JC virus.</title>
        <authorList>
            <person name="Dyson N."/>
            <person name="Buchkovich K."/>
            <person name="Whyte P."/>
            <person name="Harlow E."/>
        </authorList>
    </citation>
    <scope>INTERACTION WITH HOST RBL1</scope>
</reference>
<reference key="16">
    <citation type="journal article" date="1990" name="Cell">
        <title>The replication functions of SV40 T antigen are regulated by phosphorylation.</title>
        <authorList>
            <person name="Prives C."/>
        </authorList>
    </citation>
    <scope>PHOSPHORYLATION AT SER-106; SER-112; SER-120; SER-123; THR-124; SER-639; SER-677; SER-679 AND THR-701</scope>
</reference>
<reference key="17">
    <citation type="journal article" date="1990" name="J. Virol.">
        <title>The finger domain of simian virus 40 large T antigen controls DNA-binding specificity.</title>
        <authorList>
            <person name="Hoess A."/>
            <person name="Moarefi I.F."/>
            <person name="Fanning E."/>
            <person name="Arthur A.K."/>
        </authorList>
    </citation>
    <scope>DOMAIN</scope>
</reference>
<reference key="18">
    <citation type="journal article" date="1991" name="J. Virol.">
        <title>The zinc finger region of simian virus 40 large T antigen is needed for hexamer assembly and origin melting.</title>
        <authorList>
            <person name="Loeber G."/>
            <person name="Stenger J.E."/>
            <person name="Ray S."/>
            <person name="Parsons R.E."/>
            <person name="Anderson M.E."/>
            <person name="Tegtmeyer P."/>
        </authorList>
    </citation>
    <scope>DOMAIN</scope>
</reference>
<reference key="19">
    <citation type="journal article" date="1991" name="Mol. Cell. Biol.">
        <title>Dephosphorylation of simian virus 40 large-T antigen and p53 protein by protein phosphatase 2A: inhibition by small-t antigen.</title>
        <authorList>
            <person name="Scheidtmann K.H."/>
            <person name="Mumby M.C."/>
            <person name="Rundell K."/>
            <person name="Walter G."/>
        </authorList>
    </citation>
    <scope>DEPHOSPHORYLATION BY HOST PP2A</scope>
</reference>
<reference key="20">
    <citation type="journal article" date="1991" name="J. Virol.">
        <title>Protein phosphatase 2A dephosphorylates simian virus 40 large T antigen specifically at residues involved in regulation of DNA-binding activity.</title>
        <authorList>
            <person name="Scheidtmann K.H."/>
            <person name="Virshup D.M."/>
            <person name="Kelly T.J."/>
        </authorList>
    </citation>
    <scope>DEPHOSPHORYLATION BY HOST PP2A</scope>
</reference>
<reference key="21">
    <citation type="journal article" date="1992" name="Proc. Natl. Acad. Sci. U.S.A.">
        <title>Adenovirus E1A, simian virus 40 tumor antigen, and human papillomavirus E7 protein share the capacity to disrupt the interaction between transcription factor E2F and the retinoblastoma gene product.</title>
        <authorList>
            <person name="Chellappan S."/>
            <person name="Kraus V.B."/>
            <person name="Kroger B."/>
            <person name="Munger K."/>
            <person name="Howley P.M."/>
            <person name="Phelps W.C."/>
            <person name="Nevins J.R."/>
        </authorList>
    </citation>
    <scope>INTERACTION WITH HOST RB1</scope>
</reference>
<reference key="22">
    <citation type="journal article" date="1996" name="J. Virol.">
        <title>Mechanisms of simian virus 40 T-antigen activation by phosphorylation of threonine 124.</title>
        <authorList>
            <person name="McVey D."/>
            <person name="Woelker B."/>
            <person name="Tegtmeyer P."/>
        </authorList>
    </citation>
    <scope>PHOSPHORYLATION AT THR-124</scope>
    <scope>MUTAGENESIS OF THR-124</scope>
</reference>
<reference key="23">
    <citation type="journal article" date="1996" name="Genes Dev.">
        <title>TAF-like function of SV40 large T antigen.</title>
        <authorList>
            <person name="Damania B."/>
            <person name="Alwine J.C."/>
        </authorList>
    </citation>
    <scope>FUNCTION</scope>
    <scope>INTERACTION WITH HOST TBP AND TFIID</scope>
</reference>
<reference key="24">
    <citation type="journal article" date="1997" name="Nucleic Acids Res.">
        <title>The SV40 large T-antigen helicase can unwind four stranded DNA structures linked by G-quartets.</title>
        <authorList>
            <person name="Baran N."/>
            <person name="Pucshansky L."/>
            <person name="Marco Y."/>
            <person name="Benjamin S."/>
            <person name="Manor H."/>
        </authorList>
    </citation>
    <scope>UNWINDS G4 DNA</scope>
    <scope>CATALYTIC ACTIVITY</scope>
</reference>
<reference key="25">
    <citation type="journal article" date="1998" name="Mol. Cell. Biol.">
        <title>Simian virus 40 large T antigen stabilizes the TATA-binding protein-TFIIA complex on the TATA element.</title>
        <authorList>
            <person name="Damania B."/>
            <person name="Lieberman P."/>
            <person name="Alwine J.C."/>
        </authorList>
    </citation>
    <scope>FUNCTION</scope>
    <scope>INTERACTION WITH HOST TFIIA</scope>
</reference>
<reference key="26">
    <citation type="journal article" date="1998" name="Mol. Cell. Biol.">
        <title>The J domain of simian virus 40 large T antigen is required to functionally inactivate RB family proteins.</title>
        <authorList>
            <person name="Zalvide J."/>
            <person name="Stubdal H."/>
            <person name="DeCaprio J.A."/>
        </authorList>
    </citation>
    <scope>DOMAIN</scope>
</reference>
<reference key="27">
    <citation type="journal article" date="2002" name="Curr. Biol.">
        <title>SV40 large T antigen hexamer structure: domain organization and DNA-induced conformational changes.</title>
        <authorList>
            <person name="VanLoock M.S."/>
            <person name="Alexandrov A."/>
            <person name="Yu X."/>
            <person name="Cozzarelli N.R."/>
            <person name="Egelman E.H."/>
        </authorList>
    </citation>
    <scope>DOMAIN</scope>
    <scope>SUBUNIT</scope>
</reference>
<reference key="28">
    <citation type="journal article" date="2004" name="J. Virol.">
        <title>p53 targets simian virus 40 large T antigen for acetylation by CBP.</title>
        <authorList>
            <person name="Poulin D.L."/>
            <person name="Kung A.L."/>
            <person name="DeCaprio J.A."/>
        </authorList>
    </citation>
    <scope>ACETYLATION AT LYS-697</scope>
</reference>
<reference key="29">
    <citation type="journal article" date="2005" name="Virology">
        <title>PP2A-dependent transactivation of the cyclin A promoter by SV40 ST is mediated by a cell cycle-regulated E2F site.</title>
        <authorList>
            <person name="Skoczylas C."/>
            <person name="Henglein B."/>
            <person name="Rundell K."/>
        </authorList>
    </citation>
    <scope>FUNCTION OF ISOFORM 17KT</scope>
</reference>
<reference key="30">
    <citation type="journal article" date="2005" name="J. Biol. Chem.">
        <title>The SV40 large T antigen contains a decoy phosphodegron that mediates its interactions with Fbw7/hCdc4.</title>
        <authorList>
            <person name="Welcker M."/>
            <person name="Clurman B.E."/>
        </authorList>
    </citation>
    <scope>FUNCTION</scope>
    <scope>INTERACTION WITH HUMAN FBW7GAMMA ISOFORM</scope>
    <scope>MUTAGENESIS OF THR-701</scope>
</reference>
<reference key="31">
    <citation type="journal article" date="2005" name="J. Virol.">
        <title>Simian virus 40 large T antigen's association with the CUL7 SCF complex contributes to cellular transformation.</title>
        <authorList>
            <person name="Kasper J.S."/>
            <person name="Kuwabara H."/>
            <person name="Arai T."/>
            <person name="Ali S.H."/>
            <person name="DeCaprio J.A."/>
        </authorList>
    </citation>
    <scope>INTERACTION WITH HUMAN CUL7</scope>
    <scope>IDENTIFICATION IN A SCF(CUL7)-LIKE COMPLEX</scope>
    <scope>MUTAGENESIS OF PHE-98</scope>
</reference>
<reference key="32">
    <citation type="journal article" date="2007" name="Nucleic Acids Res.">
        <title>Involvement of chromatin and histone deacetylation in SV40 T antigen transcription regulation.</title>
        <authorList>
            <person name="Valls E."/>
            <person name="Blanco-Garcia N."/>
            <person name="Aquizu N."/>
            <person name="Piedra D."/>
            <person name="Estaras C."/>
            <person name="de la Cruz X."/>
            <person name="Martinez-Balbas M.A."/>
        </authorList>
    </citation>
    <scope>FUNCTION</scope>
    <scope>INTERACTION WITH HOST HDAC1</scope>
</reference>
<reference key="33">
    <citation type="journal article" date="2008" name="J. Virol.">
        <title>Simian virus 40 DNA replication is dependent on an interaction between topoisomerase I and the C-terminal end of T antigen.</title>
        <authorList>
            <person name="Khopde S."/>
            <person name="Simmons D.T."/>
        </authorList>
    </citation>
    <scope>INTERACTION WITH HOST TOP1</scope>
</reference>
<reference key="34">
    <citation type="journal article" date="2009" name="J. Virol.">
        <title>Simian virus 40 large T antigen disrupts genome integrity and activates a DNA damage response via Bub1 binding.</title>
        <authorList>
            <person name="Hein J."/>
            <person name="Boichuk S."/>
            <person name="Wu J."/>
            <person name="Cheng Y."/>
            <person name="Freire R."/>
            <person name="Jat P.S."/>
            <person name="Roberts T.M."/>
            <person name="Gjoerup O.V."/>
        </authorList>
    </citation>
    <scope>FUNCTION</scope>
    <scope>INTERACTION WITH HUMAN BUB1</scope>
</reference>
<reference key="35">
    <citation type="journal article" date="2012" name="PLoS Pathog.">
        <title>Identification of FAM111A as an SV40 host range restriction and adenovirus helper factor.</title>
        <authorList>
            <person name="Fine D.A."/>
            <person name="Rozenblatt-Rosen O."/>
            <person name="Padi M."/>
            <person name="Korkhin A."/>
            <person name="James R.L."/>
            <person name="Adelmant G."/>
            <person name="Yoon R."/>
            <person name="Guo L."/>
            <person name="Berrios C."/>
            <person name="Zhang Y."/>
            <person name="Calderwood M.A."/>
            <person name="Velmurgan S."/>
            <person name="Cheng J."/>
            <person name="Marto J.A."/>
            <person name="Hill D.E."/>
            <person name="Cusick M.E."/>
            <person name="Vidal M."/>
            <person name="Florens L."/>
            <person name="Washburn M.P."/>
            <person name="Litovchick L."/>
            <person name="DeCaprio J.A."/>
        </authorList>
    </citation>
    <scope>INTERACTION WITH HOST FAM111A</scope>
    <scope>C-TERMINAL REGION</scope>
</reference>
<reference key="36">
    <citation type="journal article" date="2001" name="EMBO J.">
        <title>Structural basis for the inactivation of retinoblastoma tumor suppressor by SV40 large T antigen.</title>
        <authorList>
            <person name="Kim H.-Y."/>
            <person name="Ahn B.-Y."/>
            <person name="Cho Y."/>
        </authorList>
    </citation>
    <scope>X-RAY CRYSTALLOGRAPHY (3.2 ANGSTROMS) OF 7-117</scope>
    <scope>DOMAIN</scope>
</reference>
<reference key="37">
    <citation type="journal article" date="2003" name="Nature">
        <title>Structure of the replicative helicase of the oncoprotein SV40 large tumour antigen.</title>
        <authorList>
            <person name="Li D."/>
            <person name="Zhao R."/>
            <person name="Lilyestrom W."/>
            <person name="Gai D."/>
            <person name="Zhang R."/>
            <person name="DeCaprio J.A."/>
            <person name="Fanning E."/>
            <person name="Jochimiak A."/>
            <person name="Szakonyi G."/>
            <person name="Chen X.S."/>
        </authorList>
    </citation>
    <scope>X-RAY CRYSTALLOGRAPHY (2.8 ANGSTROMS) OF 260-627</scope>
</reference>
<reference key="38">
    <citation type="journal article" date="2004" name="Cell">
        <title>Mechanisms of conformational change for a replicative hexameric helicase of SV40 large tumor antigen.</title>
        <authorList>
            <person name="Gai D."/>
            <person name="Zhao R."/>
            <person name="Li D."/>
            <person name="Finkielstein C.V."/>
            <person name="Chen X.S."/>
        </authorList>
    </citation>
    <scope>X-RAY CRYSTALLOGRAPHY (1.95 ANGSTROMS) OF 251-627</scope>
</reference>
<reference key="39">
    <citation type="journal article" date="2006" name="Genes Dev.">
        <title>Crystal structure of SV40 large T-antigen bound to p53: interplay between a viral oncoprotein and a cellular tumor suppressor.</title>
        <authorList>
            <person name="Lilyestrom W."/>
            <person name="Klein M.G."/>
            <person name="Zhang R."/>
            <person name="Joachimiak A."/>
            <person name="Chen X.S."/>
        </authorList>
    </citation>
    <scope>X-RAY CRYSTALLOGRAPHY (3.16 ANGSTROMS) OF 251-627</scope>
</reference>
<keyword id="KW-0002">3D-structure</keyword>
<keyword id="KW-0007">Acetylation</keyword>
<keyword id="KW-0010">Activator</keyword>
<keyword id="KW-0024">Alternative initiation</keyword>
<keyword id="KW-0025">Alternative splicing</keyword>
<keyword id="KW-0067">ATP-binding</keyword>
<keyword id="KW-0903">Direct protein sequencing</keyword>
<keyword id="KW-0235">DNA replication</keyword>
<keyword id="KW-0238">DNA-binding</keyword>
<keyword id="KW-0244">Early protein</keyword>
<keyword id="KW-1078">G1/S host cell cycle checkpoint dysregulation by virus</keyword>
<keyword id="KW-0325">Glycoprotein</keyword>
<keyword id="KW-0347">Helicase</keyword>
<keyword id="KW-1048">Host nucleus</keyword>
<keyword id="KW-0945">Host-virus interaction</keyword>
<keyword id="KW-0378">Hydrolase</keyword>
<keyword id="KW-1090">Inhibition of host innate immune response by virus</keyword>
<keyword id="KW-1114">Inhibition of host interferon signaling pathway by virus</keyword>
<keyword id="KW-1096">Inhibition of host JAK1 by virus</keyword>
<keyword id="KW-0922">Interferon antiviral system evasion</keyword>
<keyword id="KW-0413">Isomerase</keyword>
<keyword id="KW-0460">Magnesium</keyword>
<keyword id="KW-0479">Metal-binding</keyword>
<keyword id="KW-1121">Modulation of host cell cycle by virus</keyword>
<keyword id="KW-1123">Modulation of host E3 ubiquitin ligases by virus</keyword>
<keyword id="KW-1130">Modulation of host ubiquitin pathway by virus</keyword>
<keyword id="KW-0547">Nucleotide-binding</keyword>
<keyword id="KW-0553">Oncogene</keyword>
<keyword id="KW-0597">Phosphoprotein</keyword>
<keyword id="KW-1185">Reference proteome</keyword>
<keyword id="KW-0804">Transcription</keyword>
<keyword id="KW-0805">Transcription regulation</keyword>
<keyword id="KW-0899">Viral immunoevasion</keyword>
<keyword id="KW-0862">Zinc</keyword>
<keyword id="KW-0863">Zinc-finger</keyword>
<evidence type="ECO:0000255" key="1">
    <source>
        <dbReference type="PROSITE-ProRule" id="PRU00286"/>
    </source>
</evidence>
<evidence type="ECO:0000255" key="2">
    <source>
        <dbReference type="PROSITE-ProRule" id="PRU00551"/>
    </source>
</evidence>
<evidence type="ECO:0000255" key="3">
    <source>
        <dbReference type="PROSITE-ProRule" id="PRU00620"/>
    </source>
</evidence>
<evidence type="ECO:0000255" key="4">
    <source>
        <dbReference type="PROSITE-ProRule" id="PRU00671"/>
    </source>
</evidence>
<evidence type="ECO:0000256" key="5">
    <source>
        <dbReference type="SAM" id="MobiDB-lite"/>
    </source>
</evidence>
<evidence type="ECO:0000269" key="6">
    <source>
    </source>
</evidence>
<evidence type="ECO:0000269" key="7">
    <source>
    </source>
</evidence>
<evidence type="ECO:0000269" key="8">
    <source>
    </source>
</evidence>
<evidence type="ECO:0000269" key="9">
    <source>
    </source>
</evidence>
<evidence type="ECO:0000269" key="10">
    <source>
    </source>
</evidence>
<evidence type="ECO:0000269" key="11">
    <source>
    </source>
</evidence>
<evidence type="ECO:0000269" key="12">
    <source>
    </source>
</evidence>
<evidence type="ECO:0000269" key="13">
    <source>
    </source>
</evidence>
<evidence type="ECO:0000269" key="14">
    <source>
    </source>
</evidence>
<evidence type="ECO:0000269" key="15">
    <source>
    </source>
</evidence>
<evidence type="ECO:0000269" key="16">
    <source>
    </source>
</evidence>
<evidence type="ECO:0000269" key="17">
    <source>
    </source>
</evidence>
<evidence type="ECO:0000269" key="18">
    <source>
    </source>
</evidence>
<evidence type="ECO:0000269" key="19">
    <source>
    </source>
</evidence>
<evidence type="ECO:0000269" key="20">
    <source>
    </source>
</evidence>
<evidence type="ECO:0000269" key="21">
    <source>
    </source>
</evidence>
<evidence type="ECO:0000269" key="22">
    <source>
    </source>
</evidence>
<evidence type="ECO:0000269" key="23">
    <source>
    </source>
</evidence>
<evidence type="ECO:0000269" key="24">
    <source>
    </source>
</evidence>
<evidence type="ECO:0000269" key="25">
    <source>
    </source>
</evidence>
<evidence type="ECO:0000269" key="26">
    <source>
    </source>
</evidence>
<evidence type="ECO:0000269" key="27">
    <source>
    </source>
</evidence>
<evidence type="ECO:0000269" key="28">
    <source>
    </source>
</evidence>
<evidence type="ECO:0000269" key="29">
    <source>
    </source>
</evidence>
<evidence type="ECO:0000269" key="30">
    <source>
    </source>
</evidence>
<evidence type="ECO:0000269" key="31">
    <source>
    </source>
</evidence>
<evidence type="ECO:0000269" key="32">
    <source>
    </source>
</evidence>
<evidence type="ECO:0000269" key="33">
    <source>
    </source>
</evidence>
<evidence type="ECO:0000269" key="34">
    <source>
    </source>
</evidence>
<evidence type="ECO:0000269" key="35">
    <source>
    </source>
</evidence>
<evidence type="ECO:0000269" key="36">
    <source>
    </source>
</evidence>
<evidence type="ECO:0000303" key="37">
    <source>
    </source>
</evidence>
<evidence type="ECO:0000305" key="38"/>
<evidence type="ECO:0000305" key="39">
    <source>
    </source>
</evidence>
<evidence type="ECO:0000305" key="40">
    <source>
    </source>
</evidence>
<evidence type="ECO:0000305" key="41">
    <source>
    </source>
</evidence>
<evidence type="ECO:0007829" key="42">
    <source>
        <dbReference type="PDB" id="1GH6"/>
    </source>
</evidence>
<evidence type="ECO:0007829" key="43">
    <source>
        <dbReference type="PDB" id="1N25"/>
    </source>
</evidence>
<evidence type="ECO:0007829" key="44">
    <source>
        <dbReference type="PDB" id="1SVL"/>
    </source>
</evidence>
<evidence type="ECO:0007829" key="45">
    <source>
        <dbReference type="PDB" id="1SVM"/>
    </source>
</evidence>
<evidence type="ECO:0007829" key="46">
    <source>
        <dbReference type="PDB" id="1SVO"/>
    </source>
</evidence>
<evidence type="ECO:0007829" key="47">
    <source>
        <dbReference type="PDB" id="2FUF"/>
    </source>
</evidence>
<evidence type="ECO:0007829" key="48">
    <source>
        <dbReference type="PDB" id="2H1L"/>
    </source>
</evidence>
<evidence type="ECO:0007829" key="49">
    <source>
        <dbReference type="PDB" id="4GDF"/>
    </source>
</evidence>
<feature type="chain" id="PRO_0000115046" description="Large T antigen">
    <location>
        <begin position="1"/>
        <end position="708"/>
    </location>
</feature>
<feature type="domain" description="J" evidence="1">
    <location>
        <begin position="12"/>
        <end position="75"/>
    </location>
</feature>
<feature type="domain" description="SF3 helicase" evidence="2">
    <location>
        <begin position="400"/>
        <end position="560"/>
    </location>
</feature>
<feature type="DNA-binding region" description="T-ag OBD" evidence="3">
    <location>
        <begin position="139"/>
        <end position="254"/>
    </location>
</feature>
<feature type="zinc finger region" description="T-ag D1-type" evidence="4">
    <location>
        <begin position="265"/>
        <end position="357"/>
    </location>
</feature>
<feature type="region of interest" description="Binding of LT to the CUL7 complex">
    <location>
        <begin position="63"/>
        <end position="89"/>
    </location>
</feature>
<feature type="region of interest" description="Disordered" evidence="5">
    <location>
        <begin position="109"/>
        <end position="134"/>
    </location>
</feature>
<feature type="region of interest" description="Binding to host TP53 protein">
    <location>
        <begin position="337"/>
        <end position="672"/>
    </location>
</feature>
<feature type="region of interest" description="ATPase activity">
    <location>
        <begin position="418"/>
        <end position="616"/>
    </location>
</feature>
<feature type="region of interest" description="C-terminal region">
    <location>
        <begin position="627"/>
        <end position="708"/>
    </location>
</feature>
<feature type="region of interest" description="Disordered" evidence="5">
    <location>
        <begin position="630"/>
        <end position="685"/>
    </location>
</feature>
<feature type="region of interest" description="CPD">
    <location>
        <begin position="699"/>
        <end position="708"/>
    </location>
</feature>
<feature type="short sequence motif" description="LXCXE motif" evidence="6">
    <location>
        <begin position="103"/>
        <end position="107"/>
    </location>
</feature>
<feature type="short sequence motif" description="Nuclear localization signal" evidence="30">
    <location>
        <begin position="125"/>
        <end position="132"/>
    </location>
</feature>
<feature type="compositionally biased region" description="Basic and acidic residues" evidence="5">
    <location>
        <begin position="642"/>
        <end position="662"/>
    </location>
</feature>
<feature type="compositionally biased region" description="Polar residues" evidence="5">
    <location>
        <begin position="663"/>
        <end position="679"/>
    </location>
</feature>
<feature type="binding site" evidence="4">
    <location>
        <position position="302"/>
    </location>
    <ligand>
        <name>Zn(2+)</name>
        <dbReference type="ChEBI" id="CHEBI:29105"/>
    </ligand>
</feature>
<feature type="binding site" evidence="4">
    <location>
        <position position="305"/>
    </location>
    <ligand>
        <name>Zn(2+)</name>
        <dbReference type="ChEBI" id="CHEBI:29105"/>
    </ligand>
</feature>
<feature type="binding site" evidence="4">
    <location>
        <position position="313"/>
    </location>
    <ligand>
        <name>Zn(2+)</name>
        <dbReference type="ChEBI" id="CHEBI:29105"/>
    </ligand>
</feature>
<feature type="binding site" evidence="4">
    <location>
        <position position="317"/>
    </location>
    <ligand>
        <name>Zn(2+)</name>
        <dbReference type="ChEBI" id="CHEBI:29105"/>
    </ligand>
</feature>
<feature type="binding site" evidence="2">
    <location>
        <begin position="426"/>
        <end position="433"/>
    </location>
    <ligand>
        <name>ATP</name>
        <dbReference type="ChEBI" id="CHEBI:30616"/>
    </ligand>
</feature>
<feature type="modified residue" description="N-acetylmethionine; by host" evidence="17">
    <location>
        <position position="1"/>
    </location>
</feature>
<feature type="modified residue" description="Phosphoserine; by host" evidence="18 26">
    <location>
        <position position="106"/>
    </location>
</feature>
<feature type="modified residue" description="Phosphoserine; by host" evidence="18 26">
    <location>
        <position position="112"/>
    </location>
</feature>
<feature type="modified residue" description="Phosphoserine; by host" evidence="18">
    <location>
        <position position="120"/>
    </location>
</feature>
<feature type="modified residue" description="Phosphoserine; by host" evidence="18 26">
    <location>
        <position position="123"/>
    </location>
</feature>
<feature type="modified residue" description="Phosphothreonine; by host" evidence="18 23 26 33">
    <location>
        <position position="124"/>
    </location>
</feature>
<feature type="modified residue" description="Phosphoserine; by host" evidence="18">
    <location>
        <position position="639"/>
    </location>
</feature>
<feature type="modified residue" description="Phosphoserine; by host" evidence="26">
    <location>
        <position position="676"/>
    </location>
</feature>
<feature type="modified residue" description="Phosphoserine; by host" evidence="18 26">
    <location>
        <position position="677"/>
    </location>
</feature>
<feature type="modified residue" description="Phosphoserine; by host" evidence="18 26">
    <location>
        <position position="679"/>
    </location>
</feature>
<feature type="modified residue" description="N6-acetyllysine; by host" evidence="9">
    <location>
        <position position="697"/>
    </location>
</feature>
<feature type="modified residue" description="Phosphothreonine; by host" evidence="18 26">
    <location>
        <position position="701"/>
    </location>
</feature>
<feature type="splice variant" id="VSP_035893" description="In isoform 17kT antigen." evidence="37">
    <original>VEDP</original>
    <variation>ALLT</variation>
    <location>
        <begin position="132"/>
        <end position="135"/>
    </location>
</feature>
<feature type="splice variant" id="VSP_035894" description="In isoform 17kT antigen." evidence="37">
    <location>
        <begin position="136"/>
        <end position="708"/>
    </location>
</feature>
<feature type="sequence variant">
    <original>Y</original>
    <variation>F</variation>
    <location>
        <position position="531"/>
    </location>
</feature>
<feature type="sequence variant">
    <original>P</original>
    <variation>A</variation>
    <location>
        <position position="549"/>
    </location>
</feature>
<feature type="mutagenesis site" description="Complete loss of interaction with host CUL7." evidence="12">
    <original>F</original>
    <variation>A</variation>
    <location>
        <position position="98"/>
    </location>
</feature>
<feature type="mutagenesis site" description="200-fold reduction in phosphorylation by CDC2. No DNA replication activation." evidence="33">
    <original>T</original>
    <variation>A</variation>
    <location>
        <position position="124"/>
    </location>
</feature>
<feature type="mutagenesis site" description="Enhanced DNA replication.">
    <original>S</original>
    <variation>A</variation>
    <location>
        <position position="679"/>
    </location>
</feature>
<feature type="mutagenesis site" description="Complete loss of interaction with host FBW7gamma isoform." evidence="10">
    <original>T</original>
    <variation>A</variation>
    <location>
        <position position="701"/>
    </location>
</feature>
<feature type="helix" evidence="42">
    <location>
        <begin position="7"/>
        <end position="16"/>
    </location>
</feature>
<feature type="helix" evidence="42">
    <location>
        <begin position="27"/>
        <end position="36"/>
    </location>
</feature>
<feature type="turn" evidence="42">
    <location>
        <begin position="37"/>
        <end position="40"/>
    </location>
</feature>
<feature type="turn" evidence="42">
    <location>
        <begin position="43"/>
        <end position="45"/>
    </location>
</feature>
<feature type="turn" evidence="42">
    <location>
        <begin position="48"/>
        <end position="52"/>
    </location>
</feature>
<feature type="helix" evidence="42">
    <location>
        <begin position="53"/>
        <end position="67"/>
    </location>
</feature>
<feature type="strand" evidence="42">
    <location>
        <begin position="87"/>
        <end position="89"/>
    </location>
</feature>
<feature type="helix" evidence="42">
    <location>
        <begin position="91"/>
        <end position="102"/>
    </location>
</feature>
<feature type="strand" evidence="47">
    <location>
        <begin position="136"/>
        <end position="138"/>
    </location>
</feature>
<feature type="helix" evidence="47">
    <location>
        <begin position="140"/>
        <end position="145"/>
    </location>
</feature>
<feature type="strand" evidence="47">
    <location>
        <begin position="156"/>
        <end position="163"/>
    </location>
</feature>
<feature type="helix" evidence="47">
    <location>
        <begin position="165"/>
        <end position="178"/>
    </location>
</feature>
<feature type="strand" evidence="47">
    <location>
        <begin position="182"/>
        <end position="189"/>
    </location>
</feature>
<feature type="strand" evidence="47">
    <location>
        <begin position="192"/>
        <end position="203"/>
    </location>
</feature>
<feature type="helix" evidence="47">
    <location>
        <begin position="205"/>
        <end position="215"/>
    </location>
</feature>
<feature type="strand" evidence="49">
    <location>
        <begin position="217"/>
        <end position="219"/>
    </location>
</feature>
<feature type="strand" evidence="47">
    <location>
        <begin position="221"/>
        <end position="227"/>
    </location>
</feature>
<feature type="helix" evidence="47">
    <location>
        <begin position="229"/>
        <end position="236"/>
    </location>
</feature>
<feature type="strand" evidence="47">
    <location>
        <begin position="242"/>
        <end position="248"/>
    </location>
</feature>
<feature type="helix" evidence="47">
    <location>
        <begin position="251"/>
        <end position="254"/>
    </location>
</feature>
<feature type="helix" evidence="45">
    <location>
        <begin position="270"/>
        <end position="279"/>
    </location>
</feature>
<feature type="helix" evidence="45">
    <location>
        <begin position="285"/>
        <end position="293"/>
    </location>
</feature>
<feature type="helix" evidence="45">
    <location>
        <begin position="294"/>
        <end position="296"/>
    </location>
</feature>
<feature type="turn" evidence="46">
    <location>
        <begin position="299"/>
        <end position="301"/>
    </location>
</feature>
<feature type="helix" evidence="45">
    <location>
        <begin position="303"/>
        <end position="306"/>
    </location>
</feature>
<feature type="helix" evidence="45">
    <location>
        <begin position="311"/>
        <end position="314"/>
    </location>
</feature>
<feature type="helix" evidence="45">
    <location>
        <begin position="317"/>
        <end position="327"/>
    </location>
</feature>
<feature type="helix" evidence="45">
    <location>
        <begin position="333"/>
        <end position="354"/>
    </location>
</feature>
<feature type="helix" evidence="45">
    <location>
        <begin position="357"/>
        <end position="375"/>
    </location>
</feature>
<feature type="strand" evidence="44">
    <location>
        <begin position="377"/>
        <end position="379"/>
    </location>
</feature>
<feature type="helix" evidence="45">
    <location>
        <begin position="384"/>
        <end position="394"/>
    </location>
</feature>
<feature type="turn" evidence="45">
    <location>
        <begin position="395"/>
        <end position="397"/>
    </location>
</feature>
<feature type="helix" evidence="45">
    <location>
        <begin position="401"/>
        <end position="414"/>
    </location>
</feature>
<feature type="strand" evidence="45">
    <location>
        <begin position="421"/>
        <end position="425"/>
    </location>
</feature>
<feature type="strand" evidence="43">
    <location>
        <begin position="428"/>
        <end position="431"/>
    </location>
</feature>
<feature type="helix" evidence="45">
    <location>
        <begin position="432"/>
        <end position="443"/>
    </location>
</feature>
<feature type="strand" evidence="45">
    <location>
        <begin position="446"/>
        <end position="448"/>
    </location>
</feature>
<feature type="strand" evidence="48">
    <location>
        <begin position="450"/>
        <end position="452"/>
    </location>
</feature>
<feature type="turn" evidence="45">
    <location>
        <begin position="454"/>
        <end position="456"/>
    </location>
</feature>
<feature type="helix" evidence="45">
    <location>
        <begin position="457"/>
        <end position="461"/>
    </location>
</feature>
<feature type="helix" evidence="45">
    <location>
        <begin position="462"/>
        <end position="464"/>
    </location>
</feature>
<feature type="strand" evidence="45">
    <location>
        <begin position="470"/>
        <end position="472"/>
    </location>
</feature>
<feature type="turn" evidence="45">
    <location>
        <begin position="479"/>
        <end position="484"/>
    </location>
</feature>
<feature type="helix" evidence="45">
    <location>
        <begin position="490"/>
        <end position="495"/>
    </location>
</feature>
<feature type="helix" evidence="45">
    <location>
        <begin position="498"/>
        <end position="502"/>
    </location>
</feature>
<feature type="strand" evidence="45">
    <location>
        <begin position="507"/>
        <end position="509"/>
    </location>
</feature>
<feature type="strand" evidence="45">
    <location>
        <begin position="512"/>
        <end position="514"/>
    </location>
</feature>
<feature type="strand" evidence="45">
    <location>
        <begin position="517"/>
        <end position="519"/>
    </location>
</feature>
<feature type="strand" evidence="45">
    <location>
        <begin position="524"/>
        <end position="528"/>
    </location>
</feature>
<feature type="helix" evidence="45">
    <location>
        <begin position="535"/>
        <end position="538"/>
    </location>
</feature>
<feature type="strand" evidence="45">
    <location>
        <begin position="541"/>
        <end position="546"/>
    </location>
</feature>
<feature type="helix" evidence="45">
    <location>
        <begin position="551"/>
        <end position="558"/>
    </location>
</feature>
<feature type="helix" evidence="45">
    <location>
        <begin position="562"/>
        <end position="565"/>
    </location>
</feature>
<feature type="helix" evidence="45">
    <location>
        <begin position="572"/>
        <end position="582"/>
    </location>
</feature>
<feature type="helix" evidence="45">
    <location>
        <begin position="585"/>
        <end position="587"/>
    </location>
</feature>
<feature type="helix" evidence="45">
    <location>
        <begin position="590"/>
        <end position="592"/>
    </location>
</feature>
<feature type="helix" evidence="45">
    <location>
        <begin position="593"/>
        <end position="606"/>
    </location>
</feature>
<feature type="helix" evidence="45">
    <location>
        <begin position="609"/>
        <end position="621"/>
    </location>
</feature>
<sequence>MDKVLNREESLQLMDLLGLERSAWGNIPLMRKAYLKKCKEFHPDKGGDEEKMKKMNTLYKKMEDGVKYAHQPDFGGFWDATEIPTYGTDEWEQWWNAFNEENLFCSEEMPSSDDEATADSQHSTPPKKKRKVEDPKDFPSELLSFLSHAVFSNRTLACFAIYTTKEKAALLYKKIMEKYSVTFISRHNSYNHNILFFLTPHRHRVSAINNYAQKLCTFSFLICKGVNKEYLMYSALTRDPFSVIEESLPGGLKEHDFNPEEAEETKQVSWKLVTEYAMETKCDDVLLLLGMYLEFQYSFEMCLKCIKKEQPSHYKYHEKHYANAAIFADSKNQKTICQQAVDTVLAKKRVDSLQLTREQMLTNRFNDLLDRMDIMFGSTGSADIEEWMAGVAWLHCLLPKMDSVVYDFLKCMVYNIPKKRYWLFKGPIDSGKTTLAAALLELCGGKALNVNLPLDRLNFELGVAIDQFLVVFEDVKGTGGESRDLPSGQGINNLDNLRDYLDGSVKVNLEKKHLNKRTQIFPPGIVTMNEYSVPKTLQARFVKQIDFRPKDYLKHCLERSEFLLEKRIIQSGIALLLMLIWYRPVAEFAQSIQSRIVEWKERLDKEFSLSVYQKMKFNVAMGIGVLDWLRNSDDDDEDSQENADKNEDGGEKNMEDSGHETGIDSQSQGSFQAPQSSQSVHDHNQPYHICRGFTCFKKPPTPPPEPET</sequence>
<proteinExistence type="evidence at protein level"/>
<dbReference type="EC" id="5.6.2.4" evidence="24 25 34"/>
<dbReference type="EMBL" id="J02400">
    <property type="protein sequence ID" value="AAB59924.1"/>
    <property type="molecule type" value="Genomic_DNA"/>
</dbReference>
<dbReference type="RefSeq" id="NP_043127.1">
    <molecule id="P03070-1"/>
    <property type="nucleotide sequence ID" value="NC_001669.1"/>
</dbReference>
<dbReference type="RefSeq" id="YP_003708382.1">
    <property type="nucleotide sequence ID" value="NC_001669.1"/>
</dbReference>
<dbReference type="PDB" id="1EJL">
    <property type="method" value="X-ray"/>
    <property type="resolution" value="2.80 A"/>
    <property type="chains" value="A/B=126-132"/>
</dbReference>
<dbReference type="PDB" id="1GH6">
    <property type="method" value="X-ray"/>
    <property type="resolution" value="3.20 A"/>
    <property type="chains" value="A=7-117"/>
</dbReference>
<dbReference type="PDB" id="1N25">
    <property type="method" value="X-ray"/>
    <property type="resolution" value="2.80 A"/>
    <property type="chains" value="A/B=260-627"/>
</dbReference>
<dbReference type="PDB" id="1Q1S">
    <property type="method" value="X-ray"/>
    <property type="resolution" value="2.30 A"/>
    <property type="chains" value="A/B=110-133"/>
</dbReference>
<dbReference type="PDB" id="1Q1T">
    <property type="method" value="X-ray"/>
    <property type="resolution" value="2.50 A"/>
    <property type="chains" value="A/B=110-134"/>
</dbReference>
<dbReference type="PDB" id="1SVL">
    <property type="method" value="X-ray"/>
    <property type="resolution" value="1.95 A"/>
    <property type="chains" value="A/B/C=251-627"/>
</dbReference>
<dbReference type="PDB" id="1SVM">
    <property type="method" value="X-ray"/>
    <property type="resolution" value="1.94 A"/>
    <property type="chains" value="A/B/C/D/E/F=251-627"/>
</dbReference>
<dbReference type="PDB" id="1SVO">
    <property type="method" value="X-ray"/>
    <property type="resolution" value="2.60 A"/>
    <property type="chains" value="A/B=251-627"/>
</dbReference>
<dbReference type="PDB" id="1TBD">
    <property type="method" value="NMR"/>
    <property type="chains" value="A=131-260"/>
</dbReference>
<dbReference type="PDB" id="1Z1D">
    <property type="method" value="NMR"/>
    <property type="chains" value="B=131-259"/>
</dbReference>
<dbReference type="PDB" id="2FUF">
    <property type="method" value="X-ray"/>
    <property type="resolution" value="1.45 A"/>
    <property type="chains" value="A=131-259"/>
</dbReference>
<dbReference type="PDB" id="2H1L">
    <property type="method" value="X-ray"/>
    <property type="resolution" value="3.16 A"/>
    <property type="chains" value="A/B/C/D/E/F/G/H/I/J/K/L=260-627"/>
</dbReference>
<dbReference type="PDB" id="2IF9">
    <property type="method" value="X-ray"/>
    <property type="resolution" value="2.59 A"/>
    <property type="chains" value="A/B=131-260"/>
</dbReference>
<dbReference type="PDB" id="2IPR">
    <property type="method" value="X-ray"/>
    <property type="resolution" value="1.50 A"/>
    <property type="chains" value="A/B=131-259"/>
</dbReference>
<dbReference type="PDB" id="2ITJ">
    <property type="method" value="X-ray"/>
    <property type="resolution" value="2.50 A"/>
    <property type="chains" value="A/B=131-259"/>
</dbReference>
<dbReference type="PDB" id="2ITL">
    <property type="method" value="X-ray"/>
    <property type="resolution" value="1.65 A"/>
    <property type="chains" value="A/B=131-259"/>
</dbReference>
<dbReference type="PDB" id="2NL8">
    <property type="method" value="X-ray"/>
    <property type="resolution" value="2.30 A"/>
    <property type="chains" value="A=131-259"/>
</dbReference>
<dbReference type="PDB" id="2NTC">
    <property type="method" value="X-ray"/>
    <property type="resolution" value="2.40 A"/>
    <property type="chains" value="A/B=131-260"/>
</dbReference>
<dbReference type="PDB" id="2TBD">
    <property type="method" value="NMR"/>
    <property type="chains" value="A=131-260"/>
</dbReference>
<dbReference type="PDB" id="3QK2">
    <property type="method" value="X-ray"/>
    <property type="resolution" value="1.64 A"/>
    <property type="chains" value="A=131-260"/>
</dbReference>
<dbReference type="PDB" id="3QN2">
    <property type="method" value="X-ray"/>
    <property type="resolution" value="1.66 A"/>
    <property type="chains" value="A=131-260"/>
</dbReference>
<dbReference type="PDB" id="4E2I">
    <property type="method" value="X-ray"/>
    <property type="resolution" value="5.00 A"/>
    <property type="chains" value="A/B/C/D/E/F/G/H/I/J/K/L=266-627"/>
</dbReference>
<dbReference type="PDB" id="4FGN">
    <property type="method" value="X-ray"/>
    <property type="resolution" value="3.20 A"/>
    <property type="chains" value="A/B=131-260"/>
</dbReference>
<dbReference type="PDB" id="4GDF">
    <property type="method" value="X-ray"/>
    <property type="resolution" value="2.80 A"/>
    <property type="chains" value="A/B/E/F=131-627"/>
</dbReference>
<dbReference type="PDB" id="4RXH">
    <property type="method" value="X-ray"/>
    <property type="resolution" value="1.76 A"/>
    <property type="chains" value="A/C=125-132"/>
</dbReference>
<dbReference type="PDB" id="5D9I">
    <property type="method" value="X-ray"/>
    <property type="resolution" value="1.70 A"/>
    <property type="chains" value="A/B=131-260"/>
</dbReference>
<dbReference type="PDB" id="9EVH">
    <property type="method" value="EM"/>
    <property type="resolution" value="3.38 A"/>
    <property type="chains" value="A/B/C/D/E/F=1-708"/>
</dbReference>
<dbReference type="PDB" id="9EVP">
    <property type="method" value="EM"/>
    <property type="resolution" value="3.12 A"/>
    <property type="chains" value="A/B/C/D/E/F=266-627"/>
</dbReference>
<dbReference type="PDB" id="9EXD">
    <property type="method" value="EM"/>
    <property type="resolution" value="3.40 A"/>
    <property type="chains" value="A/B/C/D/E/F=1-708"/>
</dbReference>
<dbReference type="PDB" id="9F3T">
    <property type="method" value="EM"/>
    <property type="resolution" value="3.00 A"/>
    <property type="chains" value="A/B/C/D/E/F=266-627"/>
</dbReference>
<dbReference type="PDB" id="9F3U">
    <property type="method" value="EM"/>
    <property type="resolution" value="3.00 A"/>
    <property type="chains" value="A/B/C/D/E/F=266-627"/>
</dbReference>
<dbReference type="PDB" id="9F5I">
    <property type="method" value="EM"/>
    <property type="resolution" value="3.00 A"/>
    <property type="chains" value="A/B/C/D/E/F=266-627"/>
</dbReference>
<dbReference type="PDB" id="9F73">
    <property type="method" value="EM"/>
    <property type="resolution" value="3.00 A"/>
    <property type="chains" value="A/B/C/D/E/F=266-627"/>
</dbReference>
<dbReference type="PDB" id="9F74">
    <property type="method" value="EM"/>
    <property type="resolution" value="3.00 A"/>
    <property type="chains" value="A/B/C/D/E/F=266-627"/>
</dbReference>
<dbReference type="PDB" id="9F75">
    <property type="method" value="EM"/>
    <property type="resolution" value="3.00 A"/>
    <property type="chains" value="A/B/C/D/E/F=266-627"/>
</dbReference>
<dbReference type="PDB" id="9F7N">
    <property type="method" value="EM"/>
    <property type="resolution" value="3.00 A"/>
    <property type="chains" value="A/B/C/D/E/F=266-627"/>
</dbReference>
<dbReference type="PDB" id="9F9N">
    <property type="method" value="EM"/>
    <property type="resolution" value="3.00 A"/>
    <property type="chains" value="A/B/C/D/E/F=266-627"/>
</dbReference>
<dbReference type="PDB" id="9F9O">
    <property type="method" value="EM"/>
    <property type="resolution" value="3.00 A"/>
    <property type="chains" value="A/B/C/D/E/F=266-627"/>
</dbReference>
<dbReference type="PDB" id="9F9W">
    <property type="method" value="EM"/>
    <property type="resolution" value="3.00 A"/>
    <property type="chains" value="A/B/C/D/E/F=266-627"/>
</dbReference>
<dbReference type="PDB" id="9F9X">
    <property type="method" value="EM"/>
    <property type="resolution" value="3.00 A"/>
    <property type="chains" value="A/B/C/D/E/F=266-627"/>
</dbReference>
<dbReference type="PDB" id="9FA1">
    <property type="method" value="EM"/>
    <property type="resolution" value="3.00 A"/>
    <property type="chains" value="A/B/C/D/E/F=266-627"/>
</dbReference>
<dbReference type="PDB" id="9FA2">
    <property type="method" value="EM"/>
    <property type="resolution" value="3.00 A"/>
    <property type="chains" value="A/B/C/D/E/F=266-627"/>
</dbReference>
<dbReference type="PDB" id="9FB0">
    <property type="method" value="EM"/>
    <property type="resolution" value="3.00 A"/>
    <property type="chains" value="A/B/C/D/E/F=266-627"/>
</dbReference>
<dbReference type="PDB" id="9FB4">
    <property type="method" value="EM"/>
    <property type="resolution" value="3.13 A"/>
    <property type="chains" value="A/B/C/D/E/F=266-627"/>
</dbReference>
<dbReference type="PDB" id="9FB5">
    <property type="method" value="EM"/>
    <property type="resolution" value="3.00 A"/>
    <property type="chains" value="A/B/C/D/E/F=266-627"/>
</dbReference>
<dbReference type="PDB" id="9FB6">
    <property type="method" value="EM"/>
    <property type="resolution" value="3.13 A"/>
    <property type="chains" value="A/B/C/D/E/F=266-627"/>
</dbReference>
<dbReference type="PDB" id="9KAE">
    <property type="method" value="EM"/>
    <property type="resolution" value="3.10 A"/>
    <property type="chains" value="A/B/C/D/E/F=266-627"/>
</dbReference>
<dbReference type="PDB" id="9KAK">
    <property type="method" value="EM"/>
    <property type="resolution" value="3.10 A"/>
    <property type="chains" value="A/B/C/D/E/F=266-627"/>
</dbReference>
<dbReference type="PDBsum" id="1EJL"/>
<dbReference type="PDBsum" id="1GH6"/>
<dbReference type="PDBsum" id="1N25"/>
<dbReference type="PDBsum" id="1Q1S"/>
<dbReference type="PDBsum" id="1Q1T"/>
<dbReference type="PDBsum" id="1SVL"/>
<dbReference type="PDBsum" id="1SVM"/>
<dbReference type="PDBsum" id="1SVO"/>
<dbReference type="PDBsum" id="1TBD"/>
<dbReference type="PDBsum" id="1Z1D"/>
<dbReference type="PDBsum" id="2FUF"/>
<dbReference type="PDBsum" id="2H1L"/>
<dbReference type="PDBsum" id="2IF9"/>
<dbReference type="PDBsum" id="2IPR"/>
<dbReference type="PDBsum" id="2ITJ"/>
<dbReference type="PDBsum" id="2ITL"/>
<dbReference type="PDBsum" id="2NL8"/>
<dbReference type="PDBsum" id="2NTC"/>
<dbReference type="PDBsum" id="2TBD"/>
<dbReference type="PDBsum" id="3QK2"/>
<dbReference type="PDBsum" id="3QN2"/>
<dbReference type="PDBsum" id="4E2I"/>
<dbReference type="PDBsum" id="4FGN"/>
<dbReference type="PDBsum" id="4GDF"/>
<dbReference type="PDBsum" id="4RXH"/>
<dbReference type="PDBsum" id="5D9I"/>
<dbReference type="PDBsum" id="9EVH"/>
<dbReference type="PDBsum" id="9EVP"/>
<dbReference type="PDBsum" id="9EXD"/>
<dbReference type="PDBsum" id="9F3T"/>
<dbReference type="PDBsum" id="9F3U"/>
<dbReference type="PDBsum" id="9F5I"/>
<dbReference type="PDBsum" id="9F73"/>
<dbReference type="PDBsum" id="9F74"/>
<dbReference type="PDBsum" id="9F75"/>
<dbReference type="PDBsum" id="9F7N"/>
<dbReference type="PDBsum" id="9F9N"/>
<dbReference type="PDBsum" id="9F9O"/>
<dbReference type="PDBsum" id="9F9W"/>
<dbReference type="PDBsum" id="9F9X"/>
<dbReference type="PDBsum" id="9FA1"/>
<dbReference type="PDBsum" id="9FA2"/>
<dbReference type="PDBsum" id="9FB0"/>
<dbReference type="PDBsum" id="9FB4"/>
<dbReference type="PDBsum" id="9FB5"/>
<dbReference type="PDBsum" id="9FB6"/>
<dbReference type="PDBsum" id="9KAE"/>
<dbReference type="PDBsum" id="9KAK"/>
<dbReference type="BMRB" id="P03070"/>
<dbReference type="EMDB" id="EMD-50002"/>
<dbReference type="EMDB" id="EMD-50010"/>
<dbReference type="EMDB" id="EMD-50036"/>
<dbReference type="EMDB" id="EMD-50179"/>
<dbReference type="EMDB" id="EMD-50180"/>
<dbReference type="EMDB" id="EMD-50190"/>
<dbReference type="EMDB" id="EMD-50244"/>
<dbReference type="EMDB" id="EMD-50245"/>
<dbReference type="EMDB" id="EMD-50246"/>
<dbReference type="EMDB" id="EMD-50250"/>
<dbReference type="EMDB" id="EMD-50256"/>
<dbReference type="EMDB" id="EMD-50257"/>
<dbReference type="EMDB" id="EMD-50261"/>
<dbReference type="EMDB" id="EMD-50262"/>
<dbReference type="EMDB" id="EMD-50264"/>
<dbReference type="EMDB" id="EMD-50265"/>
<dbReference type="EMDB" id="EMD-50286"/>
<dbReference type="EMDB" id="EMD-50287"/>
<dbReference type="EMDB" id="EMD-50288"/>
<dbReference type="EMDB" id="EMD-50289"/>
<dbReference type="EMDB" id="EMD-62206"/>
<dbReference type="EMDB" id="EMD-62209"/>
<dbReference type="SMR" id="P03070"/>
<dbReference type="BioGRID" id="3509198">
    <property type="interactions" value="8"/>
</dbReference>
<dbReference type="DIP" id="DIP-24251N"/>
<dbReference type="IntAct" id="P03070">
    <property type="interactions" value="60"/>
</dbReference>
<dbReference type="MINT" id="P03070"/>
<dbReference type="BindingDB" id="P03070"/>
<dbReference type="ChEMBL" id="CHEMBL1075257"/>
<dbReference type="GlyConnect" id="326">
    <property type="glycosylation" value="1 O-GlcNAc glycan"/>
</dbReference>
<dbReference type="iPTMnet" id="P03070"/>
<dbReference type="ABCD" id="P03070">
    <property type="antibodies" value="3 sequenced antibodies"/>
</dbReference>
<dbReference type="GeneID" id="29031019"/>
<dbReference type="OrthoDB" id="14669at10239"/>
<dbReference type="EvolutionaryTrace" id="P03070"/>
<dbReference type="Proteomes" id="UP000007705">
    <property type="component" value="Genome"/>
</dbReference>
<dbReference type="GO" id="GO:0042025">
    <property type="term" value="C:host cell nucleus"/>
    <property type="evidence" value="ECO:0007669"/>
    <property type="project" value="UniProtKB-SubCell"/>
</dbReference>
<dbReference type="GO" id="GO:0005524">
    <property type="term" value="F:ATP binding"/>
    <property type="evidence" value="ECO:0007669"/>
    <property type="project" value="UniProtKB-KW"/>
</dbReference>
<dbReference type="GO" id="GO:0016887">
    <property type="term" value="F:ATP hydrolysis activity"/>
    <property type="evidence" value="ECO:0007669"/>
    <property type="project" value="RHEA"/>
</dbReference>
<dbReference type="GO" id="GO:0003688">
    <property type="term" value="F:DNA replication origin binding"/>
    <property type="evidence" value="ECO:0007669"/>
    <property type="project" value="InterPro"/>
</dbReference>
<dbReference type="GO" id="GO:0003690">
    <property type="term" value="F:double-stranded DNA binding"/>
    <property type="evidence" value="ECO:0000314"/>
    <property type="project" value="UniProtKB"/>
</dbReference>
<dbReference type="GO" id="GO:0004386">
    <property type="term" value="F:helicase activity"/>
    <property type="evidence" value="ECO:0007669"/>
    <property type="project" value="UniProtKB-KW"/>
</dbReference>
<dbReference type="GO" id="GO:0042802">
    <property type="term" value="F:identical protein binding"/>
    <property type="evidence" value="ECO:0000353"/>
    <property type="project" value="IntAct"/>
</dbReference>
<dbReference type="GO" id="GO:0003697">
    <property type="term" value="F:single-stranded DNA binding"/>
    <property type="evidence" value="ECO:0000314"/>
    <property type="project" value="UniProtKB"/>
</dbReference>
<dbReference type="GO" id="GO:0008270">
    <property type="term" value="F:zinc ion binding"/>
    <property type="evidence" value="ECO:0007669"/>
    <property type="project" value="UniProtKB-KW"/>
</dbReference>
<dbReference type="GO" id="GO:0039686">
    <property type="term" value="P:bidirectional double-stranded viral DNA replication"/>
    <property type="evidence" value="ECO:0000314"/>
    <property type="project" value="UniProtKB"/>
</dbReference>
<dbReference type="GO" id="GO:0006260">
    <property type="term" value="P:DNA replication"/>
    <property type="evidence" value="ECO:0007669"/>
    <property type="project" value="UniProtKB-KW"/>
</dbReference>
<dbReference type="GO" id="GO:0039645">
    <property type="term" value="P:symbiont-mediated perturbation of host cell cycle G1/S transition checkpoint"/>
    <property type="evidence" value="ECO:0007669"/>
    <property type="project" value="UniProtKB-KW"/>
</dbReference>
<dbReference type="GO" id="GO:0039648">
    <property type="term" value="P:symbiont-mediated perturbation of host ubiquitin-like protein modification"/>
    <property type="evidence" value="ECO:0007669"/>
    <property type="project" value="UniProtKB-KW"/>
</dbReference>
<dbReference type="GO" id="GO:0052170">
    <property type="term" value="P:symbiont-mediated suppression of host innate immune response"/>
    <property type="evidence" value="ECO:0007669"/>
    <property type="project" value="UniProtKB-KW"/>
</dbReference>
<dbReference type="GO" id="GO:0039576">
    <property type="term" value="P:symbiont-mediated suppression of host JAK-STAT cascade via inhibition of JAK1 activity"/>
    <property type="evidence" value="ECO:0007669"/>
    <property type="project" value="UniProtKB-KW"/>
</dbReference>
<dbReference type="GO" id="GO:0039502">
    <property type="term" value="P:symbiont-mediated suppression of host type I interferon-mediated signaling pathway"/>
    <property type="evidence" value="ECO:0007669"/>
    <property type="project" value="UniProtKB-KW"/>
</dbReference>
<dbReference type="GO" id="GO:0039693">
    <property type="term" value="P:viral DNA genome replication"/>
    <property type="evidence" value="ECO:0000314"/>
    <property type="project" value="UniProtKB"/>
</dbReference>
<dbReference type="CDD" id="cd06257">
    <property type="entry name" value="DnaJ"/>
    <property type="match status" value="1"/>
</dbReference>
<dbReference type="DisProt" id="DP01618"/>
<dbReference type="FunFam" id="1.10.287.110:FF:000161">
    <property type="entry name" value="Small t antigen"/>
    <property type="match status" value="1"/>
</dbReference>
<dbReference type="Gene3D" id="3.40.1310.20">
    <property type="match status" value="1"/>
</dbReference>
<dbReference type="Gene3D" id="1.10.287.110">
    <property type="entry name" value="DnaJ domain"/>
    <property type="match status" value="1"/>
</dbReference>
<dbReference type="Gene3D" id="1.20.1050.70">
    <property type="entry name" value="Large T antigen, SV40, domain 3"/>
    <property type="match status" value="1"/>
</dbReference>
<dbReference type="Gene3D" id="3.40.50.300">
    <property type="entry name" value="P-loop containing nucleotide triphosphate hydrolases"/>
    <property type="match status" value="1"/>
</dbReference>
<dbReference type="Gene3D" id="1.10.10.510">
    <property type="entry name" value="Zinc finger, large T-antigen D1 domain"/>
    <property type="match status" value="1"/>
</dbReference>
<dbReference type="IDEAL" id="IID90002"/>
<dbReference type="InterPro" id="IPR001623">
    <property type="entry name" value="DnaJ_domain"/>
</dbReference>
<dbReference type="InterPro" id="IPR014015">
    <property type="entry name" value="Helicase_SF3_DNA-vir"/>
</dbReference>
<dbReference type="InterPro" id="IPR036869">
    <property type="entry name" value="J_dom_sf"/>
</dbReference>
<dbReference type="InterPro" id="IPR016392">
    <property type="entry name" value="Lg_T_Ag_polyomavir"/>
</dbReference>
<dbReference type="InterPro" id="IPR010932">
    <property type="entry name" value="Lg_T_Ag_Polyomavir_C"/>
</dbReference>
<dbReference type="InterPro" id="IPR027417">
    <property type="entry name" value="P-loop_NTPase"/>
</dbReference>
<dbReference type="InterPro" id="IPR003133">
    <property type="entry name" value="T_Ag_DNA-bd"/>
</dbReference>
<dbReference type="InterPro" id="IPR017910">
    <property type="entry name" value="Znf_lg_T-Ag_D1-typ"/>
</dbReference>
<dbReference type="InterPro" id="IPR037102">
    <property type="entry name" value="Znf_lg_T-Ag_D1_dom_sf"/>
</dbReference>
<dbReference type="Pfam" id="PF06431">
    <property type="entry name" value="Polyoma_lg_T_C"/>
    <property type="match status" value="1"/>
</dbReference>
<dbReference type="Pfam" id="PF02217">
    <property type="entry name" value="T_Ag_DNA_bind"/>
    <property type="match status" value="1"/>
</dbReference>
<dbReference type="PIRSF" id="PIRSF003368">
    <property type="entry name" value="Large_T_antigen_polyomaV"/>
    <property type="match status" value="1"/>
</dbReference>
<dbReference type="SMART" id="SM00271">
    <property type="entry name" value="DnaJ"/>
    <property type="match status" value="1"/>
</dbReference>
<dbReference type="SUPFAM" id="SSF46565">
    <property type="entry name" value="Chaperone J-domain"/>
    <property type="match status" value="1"/>
</dbReference>
<dbReference type="SUPFAM" id="SSF55464">
    <property type="entry name" value="Origin of replication-binding domain, RBD-like"/>
    <property type="match status" value="1"/>
</dbReference>
<dbReference type="SUPFAM" id="SSF52540">
    <property type="entry name" value="P-loop containing nucleoside triphosphate hydrolases"/>
    <property type="match status" value="1"/>
</dbReference>
<dbReference type="PROSITE" id="PS50076">
    <property type="entry name" value="DNAJ_2"/>
    <property type="match status" value="1"/>
</dbReference>
<dbReference type="PROSITE" id="PS51206">
    <property type="entry name" value="SF3_HELICASE_1"/>
    <property type="match status" value="1"/>
</dbReference>
<dbReference type="PROSITE" id="PS51287">
    <property type="entry name" value="T_AG_OBD"/>
    <property type="match status" value="1"/>
</dbReference>
<dbReference type="PROSITE" id="PS51341">
    <property type="entry name" value="ZF_LTAG_D1"/>
    <property type="match status" value="1"/>
</dbReference>
<organism>
    <name type="scientific">Simian virus 40</name>
    <name type="common">SV40</name>
    <dbReference type="NCBI Taxonomy" id="1891767"/>
    <lineage>
        <taxon>Viruses</taxon>
        <taxon>Monodnaviria</taxon>
        <taxon>Shotokuvirae</taxon>
        <taxon>Cossaviricota</taxon>
        <taxon>Papovaviricetes</taxon>
        <taxon>Sepolyvirales</taxon>
        <taxon>Polyomaviridae</taxon>
        <taxon>Betapolyomavirus</taxon>
    </lineage>
</organism>